<accession>A7N9B9</accession>
<reference key="1">
    <citation type="journal article" date="2009" name="PLoS ONE">
        <title>Complete genome sequence of Francisella tularensis subspecies holarctica FTNF002-00.</title>
        <authorList>
            <person name="Barabote R.D."/>
            <person name="Xie G."/>
            <person name="Brettin T.S."/>
            <person name="Hinrichs S.H."/>
            <person name="Fey P.D."/>
            <person name="Jay J.J."/>
            <person name="Engle J.L."/>
            <person name="Godbole S.D."/>
            <person name="Noronha J.M."/>
            <person name="Scheuermann R.H."/>
            <person name="Zhou L.W."/>
            <person name="Lion C."/>
            <person name="Dempsey M.P."/>
        </authorList>
    </citation>
    <scope>NUCLEOTIDE SEQUENCE [LARGE SCALE GENOMIC DNA]</scope>
    <source>
        <strain>FTNF002-00 / FTA</strain>
    </source>
</reference>
<sequence>MGASQKNQELIGGLILFSAALLAIVVNNSPLASYYAMLETINVKLGIENLVIDKNLMHWINDGLMAIYFLYIGLEIKREIIVGTLSKLSNIITPAIAAFAGLAMPSLIYLSINHDIKVINGWAIPSATDIAFTLGILALLGTRVPAKLKLLVITIAIFDDIAAIAIIAIFYTKSLSLLSLSLGTLFILAMIICNRIFKINRSSVYVVLGFFAWFCTIKSGVHATLAGFTTALCIPFRENDKDSPANFMEDSLHPWIIYFILPVFAFANAGISFSGISFSILFEPITLGIIWGLFVGKQLGIFSILAVFKKLKWFKLGESFSNLQLYGISLLCGIGFTMSLFIGVLAFNDTHLLNAIKIGVVVGSVLSGFFGYIVLRFIVTNPS</sequence>
<keyword id="KW-0050">Antiport</keyword>
<keyword id="KW-0997">Cell inner membrane</keyword>
<keyword id="KW-1003">Cell membrane</keyword>
<keyword id="KW-0406">Ion transport</keyword>
<keyword id="KW-0472">Membrane</keyword>
<keyword id="KW-0915">Sodium</keyword>
<keyword id="KW-0739">Sodium transport</keyword>
<keyword id="KW-0812">Transmembrane</keyword>
<keyword id="KW-1133">Transmembrane helix</keyword>
<keyword id="KW-0813">Transport</keyword>
<name>NHAA_FRATF</name>
<organism>
    <name type="scientific">Francisella tularensis subsp. holarctica (strain FTNF002-00 / FTA)</name>
    <dbReference type="NCBI Taxonomy" id="458234"/>
    <lineage>
        <taxon>Bacteria</taxon>
        <taxon>Pseudomonadati</taxon>
        <taxon>Pseudomonadota</taxon>
        <taxon>Gammaproteobacteria</taxon>
        <taxon>Thiotrichales</taxon>
        <taxon>Francisellaceae</taxon>
        <taxon>Francisella</taxon>
    </lineage>
</organism>
<evidence type="ECO:0000255" key="1">
    <source>
        <dbReference type="HAMAP-Rule" id="MF_01844"/>
    </source>
</evidence>
<dbReference type="EMBL" id="CP000803">
    <property type="protein sequence ID" value="ABU60572.1"/>
    <property type="molecule type" value="Genomic_DNA"/>
</dbReference>
<dbReference type="RefSeq" id="WP_003014054.1">
    <property type="nucleotide sequence ID" value="NC_009749.1"/>
</dbReference>
<dbReference type="SMR" id="A7N9B9"/>
<dbReference type="KEGG" id="fta:FTA_0094"/>
<dbReference type="HOGENOM" id="CLU_015803_1_0_6"/>
<dbReference type="GO" id="GO:0005886">
    <property type="term" value="C:plasma membrane"/>
    <property type="evidence" value="ECO:0007669"/>
    <property type="project" value="UniProtKB-SubCell"/>
</dbReference>
<dbReference type="GO" id="GO:0015385">
    <property type="term" value="F:sodium:proton antiporter activity"/>
    <property type="evidence" value="ECO:0007669"/>
    <property type="project" value="TreeGrafter"/>
</dbReference>
<dbReference type="GO" id="GO:0006885">
    <property type="term" value="P:regulation of pH"/>
    <property type="evidence" value="ECO:0007669"/>
    <property type="project" value="InterPro"/>
</dbReference>
<dbReference type="Gene3D" id="1.20.1530.10">
    <property type="entry name" value="Na+/H+ antiporter like domain"/>
    <property type="match status" value="1"/>
</dbReference>
<dbReference type="HAMAP" id="MF_01844">
    <property type="entry name" value="NhaA"/>
    <property type="match status" value="1"/>
</dbReference>
<dbReference type="InterPro" id="IPR023171">
    <property type="entry name" value="Na/H_antiporter_dom_sf"/>
</dbReference>
<dbReference type="InterPro" id="IPR004670">
    <property type="entry name" value="NhaA"/>
</dbReference>
<dbReference type="NCBIfam" id="TIGR00773">
    <property type="entry name" value="NhaA"/>
    <property type="match status" value="1"/>
</dbReference>
<dbReference type="NCBIfam" id="NF007111">
    <property type="entry name" value="PRK09560.1"/>
    <property type="match status" value="1"/>
</dbReference>
<dbReference type="NCBIfam" id="NF007112">
    <property type="entry name" value="PRK09561.1"/>
    <property type="match status" value="1"/>
</dbReference>
<dbReference type="NCBIfam" id="NF011427">
    <property type="entry name" value="PRK14854.1"/>
    <property type="match status" value="1"/>
</dbReference>
<dbReference type="PANTHER" id="PTHR30341:SF0">
    <property type="entry name" value="NA(+)_H(+) ANTIPORTER NHAA"/>
    <property type="match status" value="1"/>
</dbReference>
<dbReference type="PANTHER" id="PTHR30341">
    <property type="entry name" value="SODIUM ION/PROTON ANTIPORTER NHAA-RELATED"/>
    <property type="match status" value="1"/>
</dbReference>
<dbReference type="Pfam" id="PF06965">
    <property type="entry name" value="Na_H_antiport_1"/>
    <property type="match status" value="1"/>
</dbReference>
<proteinExistence type="inferred from homology"/>
<comment type="function">
    <text evidence="1">Na(+)/H(+) antiporter that extrudes sodium in exchange for external protons.</text>
</comment>
<comment type="catalytic activity">
    <reaction evidence="1">
        <text>Na(+)(in) + 2 H(+)(out) = Na(+)(out) + 2 H(+)(in)</text>
        <dbReference type="Rhea" id="RHEA:29251"/>
        <dbReference type="ChEBI" id="CHEBI:15378"/>
        <dbReference type="ChEBI" id="CHEBI:29101"/>
    </reaction>
    <physiologicalReaction direction="left-to-right" evidence="1">
        <dbReference type="Rhea" id="RHEA:29252"/>
    </physiologicalReaction>
</comment>
<comment type="subcellular location">
    <subcellularLocation>
        <location evidence="1">Cell inner membrane</location>
        <topology evidence="1">Multi-pass membrane protein</topology>
    </subcellularLocation>
</comment>
<comment type="similarity">
    <text evidence="1">Belongs to the NhaA Na(+)/H(+) (TC 2.A.33) antiporter family.</text>
</comment>
<gene>
    <name evidence="1" type="primary">nhaA</name>
    <name type="ordered locus">FTA_0094</name>
</gene>
<feature type="chain" id="PRO_0000334294" description="Na(+)/H(+) antiporter NhaA">
    <location>
        <begin position="1"/>
        <end position="383"/>
    </location>
</feature>
<feature type="transmembrane region" description="Helical" evidence="1">
    <location>
        <begin position="10"/>
        <end position="30"/>
    </location>
</feature>
<feature type="transmembrane region" description="Helical" evidence="1">
    <location>
        <begin position="56"/>
        <end position="76"/>
    </location>
</feature>
<feature type="transmembrane region" description="Helical" evidence="1">
    <location>
        <begin position="91"/>
        <end position="111"/>
    </location>
</feature>
<feature type="transmembrane region" description="Helical" evidence="1">
    <location>
        <begin position="121"/>
        <end position="141"/>
    </location>
</feature>
<feature type="transmembrane region" description="Helical" evidence="1">
    <location>
        <begin position="150"/>
        <end position="170"/>
    </location>
</feature>
<feature type="transmembrane region" description="Helical" evidence="1">
    <location>
        <begin position="174"/>
        <end position="194"/>
    </location>
</feature>
<feature type="transmembrane region" description="Helical" evidence="1">
    <location>
        <begin position="206"/>
        <end position="226"/>
    </location>
</feature>
<feature type="transmembrane region" description="Helical" evidence="1">
    <location>
        <begin position="254"/>
        <end position="274"/>
    </location>
</feature>
<feature type="transmembrane region" description="Helical" evidence="1">
    <location>
        <begin position="289"/>
        <end position="308"/>
    </location>
</feature>
<feature type="transmembrane region" description="Helical" evidence="1">
    <location>
        <begin position="327"/>
        <end position="347"/>
    </location>
</feature>
<feature type="transmembrane region" description="Helical" evidence="1">
    <location>
        <begin position="355"/>
        <end position="375"/>
    </location>
</feature>
<protein>
    <recommendedName>
        <fullName evidence="1">Na(+)/H(+) antiporter NhaA</fullName>
    </recommendedName>
    <alternativeName>
        <fullName evidence="1">Sodium/proton antiporter NhaA</fullName>
    </alternativeName>
</protein>